<sequence>MATKEEKNKALAAALGQIEKQFGKGSIMKLGDTQALDVEAVSTGSLSLDVALGIGGLPMGRIVEIFGPESSGKTTLTLSVIAQAQKEGKTCAFIDAEHALDPIYAAKLGVNVNELLVSQPDNGEQALEICDALVRSGAVDVIIVDSVAALTPKAEIEGEMGDSHMGLQARLMSQALRKLTGQIKNSNCLVVFINQIRMKIGVMFGNPETTTGGNALKFYASVRLDIRRTGAIKEGEEVIGNETRVKVVKNKVAAPFRQVDFQILYGQGISKTGELIELGVKHKLVDKAGAWYAYNGEKIGQGKANAMKWLEEHPEEALALETKLRNELLANPEKVLAADIAEKNESSTGLEADY</sequence>
<name>RECA_PASMU</name>
<protein>
    <recommendedName>
        <fullName evidence="1">Protein RecA</fullName>
    </recommendedName>
    <alternativeName>
        <fullName evidence="1">Recombinase A</fullName>
    </alternativeName>
</protein>
<gene>
    <name evidence="1" type="primary">recA</name>
    <name type="ordered locus">PM1817</name>
</gene>
<feature type="chain" id="PRO_0000122790" description="Protein RecA">
    <location>
        <begin position="1"/>
        <end position="354"/>
    </location>
</feature>
<feature type="binding site" evidence="1">
    <location>
        <begin position="67"/>
        <end position="74"/>
    </location>
    <ligand>
        <name>ATP</name>
        <dbReference type="ChEBI" id="CHEBI:30616"/>
    </ligand>
</feature>
<organism>
    <name type="scientific">Pasteurella multocida (strain Pm70)</name>
    <dbReference type="NCBI Taxonomy" id="272843"/>
    <lineage>
        <taxon>Bacteria</taxon>
        <taxon>Pseudomonadati</taxon>
        <taxon>Pseudomonadota</taxon>
        <taxon>Gammaproteobacteria</taxon>
        <taxon>Pasteurellales</taxon>
        <taxon>Pasteurellaceae</taxon>
        <taxon>Pasteurella</taxon>
    </lineage>
</organism>
<reference key="1">
    <citation type="submission" date="1996-07" db="EMBL/GenBank/DDBJ databases">
        <authorList>
            <person name="Barbe-Garcia J."/>
        </authorList>
    </citation>
    <scope>NUCLEOTIDE SEQUENCE [GENOMIC DNA]</scope>
</reference>
<reference key="2">
    <citation type="journal article" date="2001" name="Proc. Natl. Acad. Sci. U.S.A.">
        <title>Complete genomic sequence of Pasteurella multocida Pm70.</title>
        <authorList>
            <person name="May B.J."/>
            <person name="Zhang Q."/>
            <person name="Li L.L."/>
            <person name="Paustian M.L."/>
            <person name="Whittam T.S."/>
            <person name="Kapur V."/>
        </authorList>
    </citation>
    <scope>NUCLEOTIDE SEQUENCE [LARGE SCALE GENOMIC DNA]</scope>
    <source>
        <strain>Pm70</strain>
    </source>
</reference>
<evidence type="ECO:0000255" key="1">
    <source>
        <dbReference type="HAMAP-Rule" id="MF_00268"/>
    </source>
</evidence>
<keyword id="KW-0067">ATP-binding</keyword>
<keyword id="KW-0963">Cytoplasm</keyword>
<keyword id="KW-0227">DNA damage</keyword>
<keyword id="KW-0233">DNA recombination</keyword>
<keyword id="KW-0234">DNA repair</keyword>
<keyword id="KW-0238">DNA-binding</keyword>
<keyword id="KW-0547">Nucleotide-binding</keyword>
<keyword id="KW-1185">Reference proteome</keyword>
<keyword id="KW-0742">SOS response</keyword>
<comment type="function">
    <text evidence="1">Can catalyze the hydrolysis of ATP in the presence of single-stranded DNA, the ATP-dependent uptake of single-stranded DNA by duplex DNA, and the ATP-dependent hybridization of homologous single-stranded DNAs. It interacts with LexA causing its activation and leading to its autocatalytic cleavage.</text>
</comment>
<comment type="subcellular location">
    <subcellularLocation>
        <location evidence="1">Cytoplasm</location>
    </subcellularLocation>
</comment>
<comment type="similarity">
    <text evidence="1">Belongs to the RecA family.</text>
</comment>
<accession>P95526</accession>
<dbReference type="EMBL" id="X99324">
    <property type="protein sequence ID" value="CAA67699.1"/>
    <property type="molecule type" value="Genomic_DNA"/>
</dbReference>
<dbReference type="EMBL" id="AE004439">
    <property type="protein sequence ID" value="AAK03901.1"/>
    <property type="molecule type" value="Genomic_DNA"/>
</dbReference>
<dbReference type="RefSeq" id="WP_005724816.1">
    <property type="nucleotide sequence ID" value="NC_002663.1"/>
</dbReference>
<dbReference type="SMR" id="P95526"/>
<dbReference type="STRING" id="272843.PM1817"/>
<dbReference type="EnsemblBacteria" id="AAK03901">
    <property type="protein sequence ID" value="AAK03901"/>
    <property type="gene ID" value="PM1817"/>
</dbReference>
<dbReference type="GeneID" id="77207161"/>
<dbReference type="KEGG" id="pmu:PM1817"/>
<dbReference type="HOGENOM" id="CLU_040469_3_2_6"/>
<dbReference type="OrthoDB" id="9776733at2"/>
<dbReference type="Proteomes" id="UP000000809">
    <property type="component" value="Chromosome"/>
</dbReference>
<dbReference type="GO" id="GO:0005829">
    <property type="term" value="C:cytosol"/>
    <property type="evidence" value="ECO:0007669"/>
    <property type="project" value="TreeGrafter"/>
</dbReference>
<dbReference type="GO" id="GO:0005524">
    <property type="term" value="F:ATP binding"/>
    <property type="evidence" value="ECO:0007669"/>
    <property type="project" value="UniProtKB-UniRule"/>
</dbReference>
<dbReference type="GO" id="GO:0016887">
    <property type="term" value="F:ATP hydrolysis activity"/>
    <property type="evidence" value="ECO:0007669"/>
    <property type="project" value="InterPro"/>
</dbReference>
<dbReference type="GO" id="GO:0140664">
    <property type="term" value="F:ATP-dependent DNA damage sensor activity"/>
    <property type="evidence" value="ECO:0007669"/>
    <property type="project" value="InterPro"/>
</dbReference>
<dbReference type="GO" id="GO:0003684">
    <property type="term" value="F:damaged DNA binding"/>
    <property type="evidence" value="ECO:0007669"/>
    <property type="project" value="UniProtKB-UniRule"/>
</dbReference>
<dbReference type="GO" id="GO:0003697">
    <property type="term" value="F:single-stranded DNA binding"/>
    <property type="evidence" value="ECO:0007669"/>
    <property type="project" value="UniProtKB-UniRule"/>
</dbReference>
<dbReference type="GO" id="GO:0006310">
    <property type="term" value="P:DNA recombination"/>
    <property type="evidence" value="ECO:0007669"/>
    <property type="project" value="UniProtKB-UniRule"/>
</dbReference>
<dbReference type="GO" id="GO:0006281">
    <property type="term" value="P:DNA repair"/>
    <property type="evidence" value="ECO:0007669"/>
    <property type="project" value="UniProtKB-UniRule"/>
</dbReference>
<dbReference type="GO" id="GO:0009432">
    <property type="term" value="P:SOS response"/>
    <property type="evidence" value="ECO:0007669"/>
    <property type="project" value="UniProtKB-UniRule"/>
</dbReference>
<dbReference type="CDD" id="cd00983">
    <property type="entry name" value="RecA"/>
    <property type="match status" value="1"/>
</dbReference>
<dbReference type="FunFam" id="3.40.50.300:FF:000087">
    <property type="entry name" value="Recombinase RecA"/>
    <property type="match status" value="1"/>
</dbReference>
<dbReference type="Gene3D" id="3.40.50.300">
    <property type="entry name" value="P-loop containing nucleotide triphosphate hydrolases"/>
    <property type="match status" value="1"/>
</dbReference>
<dbReference type="HAMAP" id="MF_00268">
    <property type="entry name" value="RecA"/>
    <property type="match status" value="1"/>
</dbReference>
<dbReference type="InterPro" id="IPR003593">
    <property type="entry name" value="AAA+_ATPase"/>
</dbReference>
<dbReference type="InterPro" id="IPR013765">
    <property type="entry name" value="DNA_recomb/repair_RecA"/>
</dbReference>
<dbReference type="InterPro" id="IPR020584">
    <property type="entry name" value="DNA_recomb/repair_RecA_CS"/>
</dbReference>
<dbReference type="InterPro" id="IPR027417">
    <property type="entry name" value="P-loop_NTPase"/>
</dbReference>
<dbReference type="InterPro" id="IPR049261">
    <property type="entry name" value="RecA-like_C"/>
</dbReference>
<dbReference type="InterPro" id="IPR049428">
    <property type="entry name" value="RecA-like_N"/>
</dbReference>
<dbReference type="InterPro" id="IPR020588">
    <property type="entry name" value="RecA_ATP-bd"/>
</dbReference>
<dbReference type="InterPro" id="IPR023400">
    <property type="entry name" value="RecA_C_sf"/>
</dbReference>
<dbReference type="InterPro" id="IPR020587">
    <property type="entry name" value="RecA_monomer-monomer_interface"/>
</dbReference>
<dbReference type="NCBIfam" id="TIGR02012">
    <property type="entry name" value="tigrfam_recA"/>
    <property type="match status" value="1"/>
</dbReference>
<dbReference type="PANTHER" id="PTHR45900:SF1">
    <property type="entry name" value="MITOCHONDRIAL DNA REPAIR PROTEIN RECA HOMOLOG-RELATED"/>
    <property type="match status" value="1"/>
</dbReference>
<dbReference type="PANTHER" id="PTHR45900">
    <property type="entry name" value="RECA"/>
    <property type="match status" value="1"/>
</dbReference>
<dbReference type="Pfam" id="PF00154">
    <property type="entry name" value="RecA"/>
    <property type="match status" value="1"/>
</dbReference>
<dbReference type="Pfam" id="PF21096">
    <property type="entry name" value="RecA_C"/>
    <property type="match status" value="1"/>
</dbReference>
<dbReference type="PRINTS" id="PR00142">
    <property type="entry name" value="RECA"/>
</dbReference>
<dbReference type="SMART" id="SM00382">
    <property type="entry name" value="AAA"/>
    <property type="match status" value="1"/>
</dbReference>
<dbReference type="SUPFAM" id="SSF52540">
    <property type="entry name" value="P-loop containing nucleoside triphosphate hydrolases"/>
    <property type="match status" value="1"/>
</dbReference>
<dbReference type="SUPFAM" id="SSF54752">
    <property type="entry name" value="RecA protein, C-terminal domain"/>
    <property type="match status" value="1"/>
</dbReference>
<dbReference type="PROSITE" id="PS00321">
    <property type="entry name" value="RECA_1"/>
    <property type="match status" value="1"/>
</dbReference>
<dbReference type="PROSITE" id="PS50162">
    <property type="entry name" value="RECA_2"/>
    <property type="match status" value="1"/>
</dbReference>
<dbReference type="PROSITE" id="PS50163">
    <property type="entry name" value="RECA_3"/>
    <property type="match status" value="1"/>
</dbReference>
<proteinExistence type="inferred from homology"/>